<evidence type="ECO:0000250" key="1"/>
<evidence type="ECO:0000269" key="2">
    <source>
    </source>
</evidence>
<evidence type="ECO:0000303" key="3">
    <source>
    </source>
</evidence>
<evidence type="ECO:0000305" key="4"/>
<reference evidence="4" key="1">
    <citation type="journal article" date="2009" name="J. Plant Physiol.">
        <title>Analysis of the soluble cell wall proteome of gymnosperms.</title>
        <authorList>
            <person name="Uzal E.N."/>
            <person name="Gomez-Ros L.V."/>
            <person name="Hernandez J.A."/>
            <person name="Pedreno M.A."/>
            <person name="Cuello J."/>
            <person name="Ros Barcelo A."/>
        </authorList>
    </citation>
    <scope>PROTEIN SEQUENCE</scope>
    <scope>SUBCELLULAR LOCATION</scope>
    <source>
        <tissue evidence="2">Callus</tissue>
    </source>
</reference>
<feature type="chain" id="PRO_0000315929" description="Cytochrome P450-like protein">
    <location>
        <begin position="1" status="less than"/>
        <end position="8" status="greater than"/>
    </location>
</feature>
<feature type="unsure residue" description="M or F" evidence="2">
    <location>
        <position position="1"/>
    </location>
</feature>
<feature type="unsure residue" description="L or I" evidence="2">
    <location>
        <position position="5"/>
    </location>
</feature>
<feature type="unsure residue" description="L or I" evidence="2">
    <location>
        <position position="6"/>
    </location>
</feature>
<feature type="unsure residue" description="K or Q" evidence="2">
    <location>
        <position position="8"/>
    </location>
</feature>
<feature type="non-terminal residue" evidence="3">
    <location>
        <position position="1"/>
    </location>
</feature>
<feature type="non-terminal residue" evidence="3">
    <location>
        <position position="8"/>
    </location>
</feature>
<dbReference type="GO" id="GO:0005576">
    <property type="term" value="C:extracellular region"/>
    <property type="evidence" value="ECO:0007669"/>
    <property type="project" value="UniProtKB-KW"/>
</dbReference>
<organism>
    <name type="scientific">Cycas revoluta</name>
    <name type="common">Sago palm</name>
    <dbReference type="NCBI Taxonomy" id="3396"/>
    <lineage>
        <taxon>Eukaryota</taxon>
        <taxon>Viridiplantae</taxon>
        <taxon>Streptophyta</taxon>
        <taxon>Embryophyta</taxon>
        <taxon>Tracheophyta</taxon>
        <taxon>Spermatophyta</taxon>
        <taxon>Cycadidae</taxon>
        <taxon>Cycadales</taxon>
        <taxon>Cycadaceae</taxon>
        <taxon>Cycas</taxon>
    </lineage>
</organism>
<sequence>MNEYLLPK</sequence>
<keyword id="KW-0134">Cell wall</keyword>
<keyword id="KW-0903">Direct protein sequencing</keyword>
<keyword id="KW-0964">Secreted</keyword>
<name>C450L_CYCRE</name>
<protein>
    <recommendedName>
        <fullName>Cytochrome P450-like protein</fullName>
    </recommendedName>
</protein>
<accession>P85360</accession>
<proteinExistence type="evidence at protein level"/>
<comment type="cofactor">
    <cofactor evidence="1">
        <name>heme</name>
        <dbReference type="ChEBI" id="CHEBI:30413"/>
    </cofactor>
</comment>
<comment type="subcellular location">
    <subcellularLocation>
        <location evidence="2">Secreted</location>
        <location evidence="2">Cell wall</location>
    </subcellularLocation>
</comment>